<name>RL14_RHOP5</name>
<sequence>MIQMQTNLDVADNSGARRVMCIKVLGGSKRRYATVGDVIVVSIKEAIPRGKVKKGDVMKAVVVRVRKDIRRPDGSVIRFDRNAAVLINNQSEPVGTRIFGPVPRELRAKNHMKIISLAPEVL</sequence>
<feature type="chain" id="PRO_1000055686" description="Large ribosomal subunit protein uL14">
    <location>
        <begin position="1"/>
        <end position="122"/>
    </location>
</feature>
<evidence type="ECO:0000255" key="1">
    <source>
        <dbReference type="HAMAP-Rule" id="MF_01367"/>
    </source>
</evidence>
<evidence type="ECO:0000305" key="2"/>
<keyword id="KW-0687">Ribonucleoprotein</keyword>
<keyword id="KW-0689">Ribosomal protein</keyword>
<keyword id="KW-0694">RNA-binding</keyword>
<keyword id="KW-0699">rRNA-binding</keyword>
<dbReference type="EMBL" id="CP000463">
    <property type="protein sequence ID" value="ABJ07506.1"/>
    <property type="molecule type" value="Genomic_DNA"/>
</dbReference>
<dbReference type="SMR" id="Q07KM8"/>
<dbReference type="STRING" id="316055.RPE_3576"/>
<dbReference type="KEGG" id="rpe:RPE_3576"/>
<dbReference type="eggNOG" id="COG0093">
    <property type="taxonomic scope" value="Bacteria"/>
</dbReference>
<dbReference type="HOGENOM" id="CLU_095071_2_1_5"/>
<dbReference type="OrthoDB" id="9806379at2"/>
<dbReference type="GO" id="GO:0022625">
    <property type="term" value="C:cytosolic large ribosomal subunit"/>
    <property type="evidence" value="ECO:0007669"/>
    <property type="project" value="TreeGrafter"/>
</dbReference>
<dbReference type="GO" id="GO:0070180">
    <property type="term" value="F:large ribosomal subunit rRNA binding"/>
    <property type="evidence" value="ECO:0007669"/>
    <property type="project" value="TreeGrafter"/>
</dbReference>
<dbReference type="GO" id="GO:0003735">
    <property type="term" value="F:structural constituent of ribosome"/>
    <property type="evidence" value="ECO:0007669"/>
    <property type="project" value="InterPro"/>
</dbReference>
<dbReference type="GO" id="GO:0006412">
    <property type="term" value="P:translation"/>
    <property type="evidence" value="ECO:0007669"/>
    <property type="project" value="UniProtKB-UniRule"/>
</dbReference>
<dbReference type="CDD" id="cd00337">
    <property type="entry name" value="Ribosomal_uL14"/>
    <property type="match status" value="1"/>
</dbReference>
<dbReference type="FunFam" id="2.40.150.20:FF:000001">
    <property type="entry name" value="50S ribosomal protein L14"/>
    <property type="match status" value="1"/>
</dbReference>
<dbReference type="Gene3D" id="2.40.150.20">
    <property type="entry name" value="Ribosomal protein L14"/>
    <property type="match status" value="1"/>
</dbReference>
<dbReference type="HAMAP" id="MF_01367">
    <property type="entry name" value="Ribosomal_uL14"/>
    <property type="match status" value="1"/>
</dbReference>
<dbReference type="InterPro" id="IPR000218">
    <property type="entry name" value="Ribosomal_uL14"/>
</dbReference>
<dbReference type="InterPro" id="IPR005745">
    <property type="entry name" value="Ribosomal_uL14_bac-type"/>
</dbReference>
<dbReference type="InterPro" id="IPR019972">
    <property type="entry name" value="Ribosomal_uL14_CS"/>
</dbReference>
<dbReference type="InterPro" id="IPR036853">
    <property type="entry name" value="Ribosomal_uL14_sf"/>
</dbReference>
<dbReference type="NCBIfam" id="TIGR01067">
    <property type="entry name" value="rplN_bact"/>
    <property type="match status" value="1"/>
</dbReference>
<dbReference type="PANTHER" id="PTHR11761">
    <property type="entry name" value="50S/60S RIBOSOMAL PROTEIN L14/L23"/>
    <property type="match status" value="1"/>
</dbReference>
<dbReference type="PANTHER" id="PTHR11761:SF3">
    <property type="entry name" value="LARGE RIBOSOMAL SUBUNIT PROTEIN UL14M"/>
    <property type="match status" value="1"/>
</dbReference>
<dbReference type="Pfam" id="PF00238">
    <property type="entry name" value="Ribosomal_L14"/>
    <property type="match status" value="1"/>
</dbReference>
<dbReference type="SMART" id="SM01374">
    <property type="entry name" value="Ribosomal_L14"/>
    <property type="match status" value="1"/>
</dbReference>
<dbReference type="SUPFAM" id="SSF50193">
    <property type="entry name" value="Ribosomal protein L14"/>
    <property type="match status" value="1"/>
</dbReference>
<dbReference type="PROSITE" id="PS00049">
    <property type="entry name" value="RIBOSOMAL_L14"/>
    <property type="match status" value="1"/>
</dbReference>
<proteinExistence type="inferred from homology"/>
<comment type="function">
    <text evidence="1">Binds to 23S rRNA. Forms part of two intersubunit bridges in the 70S ribosome.</text>
</comment>
<comment type="subunit">
    <text evidence="1">Part of the 50S ribosomal subunit. Forms a cluster with proteins L3 and L19. In the 70S ribosome, L14 and L19 interact and together make contacts with the 16S rRNA in bridges B5 and B8.</text>
</comment>
<comment type="similarity">
    <text evidence="1">Belongs to the universal ribosomal protein uL14 family.</text>
</comment>
<protein>
    <recommendedName>
        <fullName evidence="1">Large ribosomal subunit protein uL14</fullName>
    </recommendedName>
    <alternativeName>
        <fullName evidence="2">50S ribosomal protein L14</fullName>
    </alternativeName>
</protein>
<gene>
    <name evidence="1" type="primary">rplN</name>
    <name type="ordered locus">RPE_3576</name>
</gene>
<accession>Q07KM8</accession>
<reference key="1">
    <citation type="submission" date="2006-09" db="EMBL/GenBank/DDBJ databases">
        <title>Complete sequence of Rhodopseudomonas palustris BisA53.</title>
        <authorList>
            <consortium name="US DOE Joint Genome Institute"/>
            <person name="Copeland A."/>
            <person name="Lucas S."/>
            <person name="Lapidus A."/>
            <person name="Barry K."/>
            <person name="Detter J.C."/>
            <person name="Glavina del Rio T."/>
            <person name="Hammon N."/>
            <person name="Israni S."/>
            <person name="Dalin E."/>
            <person name="Tice H."/>
            <person name="Pitluck S."/>
            <person name="Chain P."/>
            <person name="Malfatti S."/>
            <person name="Shin M."/>
            <person name="Vergez L."/>
            <person name="Schmutz J."/>
            <person name="Larimer F."/>
            <person name="Land M."/>
            <person name="Hauser L."/>
            <person name="Pelletier D.A."/>
            <person name="Kyrpides N."/>
            <person name="Kim E."/>
            <person name="Harwood C.S."/>
            <person name="Oda Y."/>
            <person name="Richardson P."/>
        </authorList>
    </citation>
    <scope>NUCLEOTIDE SEQUENCE [LARGE SCALE GENOMIC DNA]</scope>
    <source>
        <strain>BisA53</strain>
    </source>
</reference>
<organism>
    <name type="scientific">Rhodopseudomonas palustris (strain BisA53)</name>
    <dbReference type="NCBI Taxonomy" id="316055"/>
    <lineage>
        <taxon>Bacteria</taxon>
        <taxon>Pseudomonadati</taxon>
        <taxon>Pseudomonadota</taxon>
        <taxon>Alphaproteobacteria</taxon>
        <taxon>Hyphomicrobiales</taxon>
        <taxon>Nitrobacteraceae</taxon>
        <taxon>Rhodopseudomonas</taxon>
    </lineage>
</organism>